<sequence>MNWEVVKLRLNMALATLGIVLLGFALALAVADYAFGAQFGVGLMLSILMFIFFLNIIQWLFGPYMINWAYRTVEVTPTDPVYGWLYSTVAEVAKYNGFRDVPKVYIADVPFPNAFAYGSPIAGKRIAFTLPILKLLNRDEIMAVAGHELGHLKHRDVELLMAVGLIPALIYYLGWWIFWGGMFGGGGGNGRGNNGGLLFLIGIAMMAVSFVFQLLVLSINRMREAYADVNSALTVPGGKENLQLALAKLTLSMDPGALEKFKKKSTTNQMASMLFFTNAIEEVPTWNARELVEIWKTTKVPWYAEIFMDHPHPAKRIQLLEKVSKY</sequence>
<name>HTPX_SACI1</name>
<organism>
    <name type="scientific">Saccharolobus islandicus (strain Y.N.15.51 / Yellowstone #2)</name>
    <name type="common">Sulfolobus islandicus</name>
    <dbReference type="NCBI Taxonomy" id="419942"/>
    <lineage>
        <taxon>Archaea</taxon>
        <taxon>Thermoproteota</taxon>
        <taxon>Thermoprotei</taxon>
        <taxon>Sulfolobales</taxon>
        <taxon>Sulfolobaceae</taxon>
        <taxon>Saccharolobus</taxon>
    </lineage>
</organism>
<protein>
    <recommendedName>
        <fullName evidence="1">Protease HtpX homolog</fullName>
        <ecNumber evidence="1">3.4.24.-</ecNumber>
    </recommendedName>
</protein>
<accession>C3NMG3</accession>
<gene>
    <name evidence="1" type="primary">htpX</name>
    <name type="ordered locus">YN1551_0654</name>
</gene>
<dbReference type="EC" id="3.4.24.-" evidence="1"/>
<dbReference type="EMBL" id="CP001404">
    <property type="protein sequence ID" value="ACP47783.1"/>
    <property type="molecule type" value="Genomic_DNA"/>
</dbReference>
<dbReference type="RefSeq" id="WP_012716523.1">
    <property type="nucleotide sequence ID" value="NC_012623.1"/>
</dbReference>
<dbReference type="GeneID" id="7809004"/>
<dbReference type="KEGG" id="sin:YN1551_0654"/>
<dbReference type="HOGENOM" id="CLU_042266_4_1_2"/>
<dbReference type="Proteomes" id="UP000006818">
    <property type="component" value="Chromosome"/>
</dbReference>
<dbReference type="GO" id="GO:0005886">
    <property type="term" value="C:plasma membrane"/>
    <property type="evidence" value="ECO:0007669"/>
    <property type="project" value="UniProtKB-SubCell"/>
</dbReference>
<dbReference type="GO" id="GO:0004222">
    <property type="term" value="F:metalloendopeptidase activity"/>
    <property type="evidence" value="ECO:0007669"/>
    <property type="project" value="UniProtKB-UniRule"/>
</dbReference>
<dbReference type="GO" id="GO:0008270">
    <property type="term" value="F:zinc ion binding"/>
    <property type="evidence" value="ECO:0007669"/>
    <property type="project" value="UniProtKB-UniRule"/>
</dbReference>
<dbReference type="GO" id="GO:0006508">
    <property type="term" value="P:proteolysis"/>
    <property type="evidence" value="ECO:0007669"/>
    <property type="project" value="UniProtKB-KW"/>
</dbReference>
<dbReference type="CDD" id="cd07338">
    <property type="entry name" value="M48B_HtpX_like"/>
    <property type="match status" value="1"/>
</dbReference>
<dbReference type="Gene3D" id="3.30.2010.10">
    <property type="entry name" value="Metalloproteases ('zincins'), catalytic domain"/>
    <property type="match status" value="1"/>
</dbReference>
<dbReference type="HAMAP" id="MF_00188">
    <property type="entry name" value="Pept_M48_protease_HtpX"/>
    <property type="match status" value="1"/>
</dbReference>
<dbReference type="InterPro" id="IPR050083">
    <property type="entry name" value="HtpX_protease"/>
</dbReference>
<dbReference type="InterPro" id="IPR022919">
    <property type="entry name" value="Pept_M48_protease_HtpX"/>
</dbReference>
<dbReference type="InterPro" id="IPR001915">
    <property type="entry name" value="Peptidase_M48"/>
</dbReference>
<dbReference type="NCBIfam" id="NF002322">
    <property type="entry name" value="PRK01265.1"/>
    <property type="match status" value="1"/>
</dbReference>
<dbReference type="PANTHER" id="PTHR43221">
    <property type="entry name" value="PROTEASE HTPX"/>
    <property type="match status" value="1"/>
</dbReference>
<dbReference type="PANTHER" id="PTHR43221:SF2">
    <property type="entry name" value="PROTEASE HTPX HOMOLOG"/>
    <property type="match status" value="1"/>
</dbReference>
<dbReference type="Pfam" id="PF01435">
    <property type="entry name" value="Peptidase_M48"/>
    <property type="match status" value="1"/>
</dbReference>
<comment type="cofactor">
    <cofactor evidence="1">
        <name>Zn(2+)</name>
        <dbReference type="ChEBI" id="CHEBI:29105"/>
    </cofactor>
    <text evidence="1">Binds 1 zinc ion per subunit.</text>
</comment>
<comment type="subcellular location">
    <subcellularLocation>
        <location evidence="1">Cell membrane</location>
        <topology evidence="1">Multi-pass membrane protein</topology>
    </subcellularLocation>
</comment>
<comment type="similarity">
    <text evidence="1">Belongs to the peptidase M48B family.</text>
</comment>
<reference key="1">
    <citation type="journal article" date="2009" name="Proc. Natl. Acad. Sci. U.S.A.">
        <title>Biogeography of the Sulfolobus islandicus pan-genome.</title>
        <authorList>
            <person name="Reno M.L."/>
            <person name="Held N.L."/>
            <person name="Fields C.J."/>
            <person name="Burke P.V."/>
            <person name="Whitaker R.J."/>
        </authorList>
    </citation>
    <scope>NUCLEOTIDE SEQUENCE [LARGE SCALE GENOMIC DNA]</scope>
    <source>
        <strain>Y.N.15.51 / Yellowstone #2</strain>
    </source>
</reference>
<keyword id="KW-1003">Cell membrane</keyword>
<keyword id="KW-0378">Hydrolase</keyword>
<keyword id="KW-0472">Membrane</keyword>
<keyword id="KW-0479">Metal-binding</keyword>
<keyword id="KW-0482">Metalloprotease</keyword>
<keyword id="KW-0645">Protease</keyword>
<keyword id="KW-0812">Transmembrane</keyword>
<keyword id="KW-1133">Transmembrane helix</keyword>
<keyword id="KW-0862">Zinc</keyword>
<proteinExistence type="inferred from homology"/>
<feature type="chain" id="PRO_1000203979" description="Protease HtpX homolog">
    <location>
        <begin position="1"/>
        <end position="326"/>
    </location>
</feature>
<feature type="transmembrane region" description="Helical" evidence="1">
    <location>
        <begin position="10"/>
        <end position="30"/>
    </location>
</feature>
<feature type="transmembrane region" description="Helical" evidence="1">
    <location>
        <begin position="41"/>
        <end position="61"/>
    </location>
</feature>
<feature type="transmembrane region" description="Helical" evidence="1">
    <location>
        <begin position="159"/>
        <end position="179"/>
    </location>
</feature>
<feature type="transmembrane region" description="Helical" evidence="1">
    <location>
        <begin position="197"/>
        <end position="217"/>
    </location>
</feature>
<feature type="active site" evidence="1">
    <location>
        <position position="148"/>
    </location>
</feature>
<feature type="binding site" evidence="1">
    <location>
        <position position="147"/>
    </location>
    <ligand>
        <name>Zn(2+)</name>
        <dbReference type="ChEBI" id="CHEBI:29105"/>
        <note>catalytic</note>
    </ligand>
</feature>
<feature type="binding site" evidence="1">
    <location>
        <position position="151"/>
    </location>
    <ligand>
        <name>Zn(2+)</name>
        <dbReference type="ChEBI" id="CHEBI:29105"/>
        <note>catalytic</note>
    </ligand>
</feature>
<feature type="binding site" evidence="1">
    <location>
        <position position="224"/>
    </location>
    <ligand>
        <name>Zn(2+)</name>
        <dbReference type="ChEBI" id="CHEBI:29105"/>
        <note>catalytic</note>
    </ligand>
</feature>
<evidence type="ECO:0000255" key="1">
    <source>
        <dbReference type="HAMAP-Rule" id="MF_00188"/>
    </source>
</evidence>